<dbReference type="EMBL" id="AC104836">
    <property type="status" value="NOT_ANNOTATED_CDS"/>
    <property type="molecule type" value="Genomic_DNA"/>
</dbReference>
<dbReference type="CCDS" id="CCDS72821.2">
    <molecule id="P0DME0-2"/>
</dbReference>
<dbReference type="RefSeq" id="NP_001274666.2">
    <molecule id="P0DME0-2"/>
    <property type="nucleotide sequence ID" value="NM_001287737.2"/>
</dbReference>
<dbReference type="SMR" id="P0DME0"/>
<dbReference type="BioGRID" id="571638">
    <property type="interactions" value="27"/>
</dbReference>
<dbReference type="FunCoup" id="P0DME0">
    <property type="interactions" value="851"/>
</dbReference>
<dbReference type="IntAct" id="P0DME0">
    <property type="interactions" value="8"/>
</dbReference>
<dbReference type="MINT" id="P0DME0"/>
<dbReference type="STRING" id="9606.ENSP00000480946"/>
<dbReference type="iPTMnet" id="P0DME0"/>
<dbReference type="PhosphoSitePlus" id="P0DME0"/>
<dbReference type="BioMuta" id="SETSIP"/>
<dbReference type="jPOST" id="P0DME0"/>
<dbReference type="MassIVE" id="P0DME0"/>
<dbReference type="PaxDb" id="9606-ENSP00000480946"/>
<dbReference type="PeptideAtlas" id="P0DME0"/>
<dbReference type="Pumba" id="P0DME0"/>
<dbReference type="DNASU" id="646817"/>
<dbReference type="Ensembl" id="ENST00000596516.3">
    <molecule id="P0DME0-2"/>
    <property type="protein sequence ID" value="ENSP00000480946.2"/>
    <property type="gene ID" value="ENSG00000230667.7"/>
</dbReference>
<dbReference type="GeneID" id="646817"/>
<dbReference type="KEGG" id="hsa:646817"/>
<dbReference type="MANE-Select" id="ENST00000596516.3">
    <property type="protein sequence ID" value="ENSP00000480946.2"/>
    <property type="RefSeq nucleotide sequence ID" value="NM_001287737.2"/>
    <property type="RefSeq protein sequence ID" value="NP_001274666.2"/>
</dbReference>
<dbReference type="UCSC" id="uc031uhi.2">
    <molecule id="P0DME0-2"/>
    <property type="organism name" value="human"/>
</dbReference>
<dbReference type="AGR" id="HGNC:42937"/>
<dbReference type="CTD" id="646817"/>
<dbReference type="DisGeNET" id="646817"/>
<dbReference type="GeneCards" id="SETSIP"/>
<dbReference type="HGNC" id="HGNC:42937">
    <property type="gene designation" value="SETSIP"/>
</dbReference>
<dbReference type="HPA" id="ENSG00000230667">
    <property type="expression patterns" value="Not detected"/>
</dbReference>
<dbReference type="MalaCards" id="SETSIP"/>
<dbReference type="neXtProt" id="NX_P0DME0"/>
<dbReference type="OpenTargets" id="ENSG00000230667"/>
<dbReference type="VEuPathDB" id="HostDB:ENSG00000230667"/>
<dbReference type="eggNOG" id="KOG1508">
    <property type="taxonomic scope" value="Eukaryota"/>
</dbReference>
<dbReference type="GeneTree" id="ENSGT00940000154891"/>
<dbReference type="InParanoid" id="P0DME0"/>
<dbReference type="OMA" id="GEQKYNK"/>
<dbReference type="OrthoDB" id="19419at2759"/>
<dbReference type="PAN-GO" id="P0DME0">
    <property type="GO annotations" value="4 GO annotations based on evolutionary models"/>
</dbReference>
<dbReference type="PathwayCommons" id="P0DME0"/>
<dbReference type="SignaLink" id="P0DME0"/>
<dbReference type="BioGRID-ORCS" id="646817">
    <property type="hits" value="19 hits in 146 CRISPR screens"/>
</dbReference>
<dbReference type="GenomeRNAi" id="646817"/>
<dbReference type="Pharos" id="P0DME0">
    <property type="development level" value="Tdark"/>
</dbReference>
<dbReference type="PRO" id="PR:P0DME0"/>
<dbReference type="Proteomes" id="UP000005640">
    <property type="component" value="Chromosome 1"/>
</dbReference>
<dbReference type="RNAct" id="P0DME0">
    <property type="molecule type" value="protein"/>
</dbReference>
<dbReference type="Bgee" id="ENSG00000230667">
    <property type="expression patterns" value="Expressed in male germ line stem cell (sensu Vertebrata) in testis and 23 other cell types or tissues"/>
</dbReference>
<dbReference type="GO" id="GO:0000785">
    <property type="term" value="C:chromatin"/>
    <property type="evidence" value="ECO:0000318"/>
    <property type="project" value="GO_Central"/>
</dbReference>
<dbReference type="GO" id="GO:0005737">
    <property type="term" value="C:cytoplasm"/>
    <property type="evidence" value="ECO:0000314"/>
    <property type="project" value="UniProtKB"/>
</dbReference>
<dbReference type="GO" id="GO:0005811">
    <property type="term" value="C:lipid droplet"/>
    <property type="evidence" value="ECO:0000314"/>
    <property type="project" value="HPA"/>
</dbReference>
<dbReference type="GO" id="GO:0005654">
    <property type="term" value="C:nucleoplasm"/>
    <property type="evidence" value="ECO:0000314"/>
    <property type="project" value="HPA"/>
</dbReference>
<dbReference type="GO" id="GO:0005634">
    <property type="term" value="C:nucleus"/>
    <property type="evidence" value="ECO:0000314"/>
    <property type="project" value="UniProtKB"/>
</dbReference>
<dbReference type="GO" id="GO:0003682">
    <property type="term" value="F:chromatin binding"/>
    <property type="evidence" value="ECO:0000314"/>
    <property type="project" value="UniProtKB"/>
</dbReference>
<dbReference type="GO" id="GO:0042393">
    <property type="term" value="F:histone binding"/>
    <property type="evidence" value="ECO:0000318"/>
    <property type="project" value="GO_Central"/>
</dbReference>
<dbReference type="GO" id="GO:0045446">
    <property type="term" value="P:endothelial cell differentiation"/>
    <property type="evidence" value="ECO:0000314"/>
    <property type="project" value="UniProtKB"/>
</dbReference>
<dbReference type="GO" id="GO:0006334">
    <property type="term" value="P:nucleosome assembly"/>
    <property type="evidence" value="ECO:0007669"/>
    <property type="project" value="InterPro"/>
</dbReference>
<dbReference type="GO" id="GO:0045944">
    <property type="term" value="P:positive regulation of transcription by RNA polymerase II"/>
    <property type="evidence" value="ECO:0000314"/>
    <property type="project" value="UniProtKB"/>
</dbReference>
<dbReference type="FunFam" id="1.20.5.1500:FF:000003">
    <property type="entry name" value="SET isoform 2"/>
    <property type="match status" value="1"/>
</dbReference>
<dbReference type="FunFam" id="3.30.1120.90:FF:000002">
    <property type="entry name" value="Testis-specific Y-encoded-like protein 2"/>
    <property type="match status" value="1"/>
</dbReference>
<dbReference type="Gene3D" id="1.20.5.1500">
    <property type="match status" value="1"/>
</dbReference>
<dbReference type="Gene3D" id="3.30.1120.90">
    <property type="entry name" value="Nucleosome assembly protein"/>
    <property type="match status" value="1"/>
</dbReference>
<dbReference type="InterPro" id="IPR037231">
    <property type="entry name" value="NAP-like_sf"/>
</dbReference>
<dbReference type="InterPro" id="IPR002164">
    <property type="entry name" value="NAP_family"/>
</dbReference>
<dbReference type="PANTHER" id="PTHR11875">
    <property type="entry name" value="TESTIS-SPECIFIC Y-ENCODED PROTEIN"/>
    <property type="match status" value="1"/>
</dbReference>
<dbReference type="Pfam" id="PF00956">
    <property type="entry name" value="NAP"/>
    <property type="match status" value="1"/>
</dbReference>
<dbReference type="SUPFAM" id="SSF143113">
    <property type="entry name" value="NAP-like"/>
    <property type="match status" value="1"/>
</dbReference>
<feature type="chain" id="PRO_0000426097" description="Protein SETSIP">
    <location>
        <begin position="1"/>
        <end position="292"/>
    </location>
</feature>
<feature type="region of interest" description="Disordered" evidence="2">
    <location>
        <begin position="1"/>
        <end position="43"/>
    </location>
</feature>
<feature type="region of interest" description="Disordered" evidence="2">
    <location>
        <begin position="158"/>
        <end position="292"/>
    </location>
</feature>
<feature type="coiled-coil region" evidence="1">
    <location>
        <begin position="35"/>
        <end position="78"/>
    </location>
</feature>
<feature type="compositionally biased region" description="Low complexity" evidence="2">
    <location>
        <begin position="1"/>
        <end position="11"/>
    </location>
</feature>
<feature type="compositionally biased region" description="Acidic residues" evidence="2">
    <location>
        <begin position="237"/>
        <end position="292"/>
    </location>
</feature>
<feature type="splice variant" id="VSP_062267" description="In isoform 1.">
    <original>M</original>
    <variation>MVWFLDFPNSM</variation>
    <location>
        <position position="1"/>
    </location>
</feature>
<proteinExistence type="evidence at protein level"/>
<name>SETLP_HUMAN</name>
<sequence>MAPKRQSPLPLQKKKPRPPPALGLEETSASAGLPKKGEKEQQEAIEHIDEVQNEIDRLNEQDSEEILKVEQKYNKLRQPFFQKRSELIAKIPNFGVTTFVNHPQVSSLLGEEDEEALHYLTKVEVTEFEDIKSGYRIDFYFDENPYFENKVFSKEFHLNESGDPSSKSTKIKWKSGKDVTKRSSQTQNKASRKRQHEEPESFFTWFTDHSDAGADELEEVIKDDIWPNPLQYYLVPDMDDEEGGEDDDDDDDDGDEGEEELEDIDEGDEDEGEEDEDDDEGEEGEEDEGEDD</sequence>
<reference key="1">
    <citation type="journal article" date="2006" name="Nature">
        <title>The DNA sequence and biological annotation of human chromosome 1.</title>
        <authorList>
            <person name="Gregory S.G."/>
            <person name="Barlow K.F."/>
            <person name="McLay K.E."/>
            <person name="Kaul R."/>
            <person name="Swarbreck D."/>
            <person name="Dunham A."/>
            <person name="Scott C.E."/>
            <person name="Howe K.L."/>
            <person name="Woodfine K."/>
            <person name="Spencer C.C.A."/>
            <person name="Jones M.C."/>
            <person name="Gillson C."/>
            <person name="Searle S."/>
            <person name="Zhou Y."/>
            <person name="Kokocinski F."/>
            <person name="McDonald L."/>
            <person name="Evans R."/>
            <person name="Phillips K."/>
            <person name="Atkinson A."/>
            <person name="Cooper R."/>
            <person name="Jones C."/>
            <person name="Hall R.E."/>
            <person name="Andrews T.D."/>
            <person name="Lloyd C."/>
            <person name="Ainscough R."/>
            <person name="Almeida J.P."/>
            <person name="Ambrose K.D."/>
            <person name="Anderson F."/>
            <person name="Andrew R.W."/>
            <person name="Ashwell R.I.S."/>
            <person name="Aubin K."/>
            <person name="Babbage A.K."/>
            <person name="Bagguley C.L."/>
            <person name="Bailey J."/>
            <person name="Beasley H."/>
            <person name="Bethel G."/>
            <person name="Bird C.P."/>
            <person name="Bray-Allen S."/>
            <person name="Brown J.Y."/>
            <person name="Brown A.J."/>
            <person name="Buckley D."/>
            <person name="Burton J."/>
            <person name="Bye J."/>
            <person name="Carder C."/>
            <person name="Chapman J.C."/>
            <person name="Clark S.Y."/>
            <person name="Clarke G."/>
            <person name="Clee C."/>
            <person name="Cobley V."/>
            <person name="Collier R.E."/>
            <person name="Corby N."/>
            <person name="Coville G.J."/>
            <person name="Davies J."/>
            <person name="Deadman R."/>
            <person name="Dunn M."/>
            <person name="Earthrowl M."/>
            <person name="Ellington A.G."/>
            <person name="Errington H."/>
            <person name="Frankish A."/>
            <person name="Frankland J."/>
            <person name="French L."/>
            <person name="Garner P."/>
            <person name="Garnett J."/>
            <person name="Gay L."/>
            <person name="Ghori M.R.J."/>
            <person name="Gibson R."/>
            <person name="Gilby L.M."/>
            <person name="Gillett W."/>
            <person name="Glithero R.J."/>
            <person name="Grafham D.V."/>
            <person name="Griffiths C."/>
            <person name="Griffiths-Jones S."/>
            <person name="Grocock R."/>
            <person name="Hammond S."/>
            <person name="Harrison E.S.I."/>
            <person name="Hart E."/>
            <person name="Haugen E."/>
            <person name="Heath P.D."/>
            <person name="Holmes S."/>
            <person name="Holt K."/>
            <person name="Howden P.J."/>
            <person name="Hunt A.R."/>
            <person name="Hunt S.E."/>
            <person name="Hunter G."/>
            <person name="Isherwood J."/>
            <person name="James R."/>
            <person name="Johnson C."/>
            <person name="Johnson D."/>
            <person name="Joy A."/>
            <person name="Kay M."/>
            <person name="Kershaw J.K."/>
            <person name="Kibukawa M."/>
            <person name="Kimberley A.M."/>
            <person name="King A."/>
            <person name="Knights A.J."/>
            <person name="Lad H."/>
            <person name="Laird G."/>
            <person name="Lawlor S."/>
            <person name="Leongamornlert D.A."/>
            <person name="Lloyd D.M."/>
            <person name="Loveland J."/>
            <person name="Lovell J."/>
            <person name="Lush M.J."/>
            <person name="Lyne R."/>
            <person name="Martin S."/>
            <person name="Mashreghi-Mohammadi M."/>
            <person name="Matthews L."/>
            <person name="Matthews N.S.W."/>
            <person name="McLaren S."/>
            <person name="Milne S."/>
            <person name="Mistry S."/>
            <person name="Moore M.J.F."/>
            <person name="Nickerson T."/>
            <person name="O'Dell C.N."/>
            <person name="Oliver K."/>
            <person name="Palmeiri A."/>
            <person name="Palmer S.A."/>
            <person name="Parker A."/>
            <person name="Patel D."/>
            <person name="Pearce A.V."/>
            <person name="Peck A.I."/>
            <person name="Pelan S."/>
            <person name="Phelps K."/>
            <person name="Phillimore B.J."/>
            <person name="Plumb R."/>
            <person name="Rajan J."/>
            <person name="Raymond C."/>
            <person name="Rouse G."/>
            <person name="Saenphimmachak C."/>
            <person name="Sehra H.K."/>
            <person name="Sheridan E."/>
            <person name="Shownkeen R."/>
            <person name="Sims S."/>
            <person name="Skuce C.D."/>
            <person name="Smith M."/>
            <person name="Steward C."/>
            <person name="Subramanian S."/>
            <person name="Sycamore N."/>
            <person name="Tracey A."/>
            <person name="Tromans A."/>
            <person name="Van Helmond Z."/>
            <person name="Wall M."/>
            <person name="Wallis J.M."/>
            <person name="White S."/>
            <person name="Whitehead S.L."/>
            <person name="Wilkinson J.E."/>
            <person name="Willey D.L."/>
            <person name="Williams H."/>
            <person name="Wilming L."/>
            <person name="Wray P.W."/>
            <person name="Wu Z."/>
            <person name="Coulson A."/>
            <person name="Vaudin M."/>
            <person name="Sulston J.E."/>
            <person name="Durbin R.M."/>
            <person name="Hubbard T."/>
            <person name="Wooster R."/>
            <person name="Dunham I."/>
            <person name="Carter N.P."/>
            <person name="McVean G."/>
            <person name="Ross M.T."/>
            <person name="Harrow J."/>
            <person name="Olson M.V."/>
            <person name="Beck S."/>
            <person name="Rogers J."/>
            <person name="Bentley D.R."/>
        </authorList>
    </citation>
    <scope>NUCLEOTIDE SEQUENCE [LARGE SCALE GENOMIC DNA]</scope>
</reference>
<reference key="2">
    <citation type="journal article" date="2012" name="Proc. Natl. Acad. Sci. U.S.A.">
        <title>Direct reprogramming of fibroblasts into endothelial cells capable of angiogenesis and reendothelialization in tissue-engineered vessels.</title>
        <authorList>
            <person name="Margariti A."/>
            <person name="Winkler B."/>
            <person name="Karamariti E."/>
            <person name="Zampetaki A."/>
            <person name="Tsai T.N."/>
            <person name="Baban D."/>
            <person name="Ragoussis J."/>
            <person name="Huang Y."/>
            <person name="Han J.D."/>
            <person name="Zeng L."/>
            <person name="Hu Y."/>
            <person name="Xu Q."/>
        </authorList>
    </citation>
    <scope>FUNCTION</scope>
    <scope>SUBCELLULAR LOCATION</scope>
    <scope>ASSOCIATION WITH CHROMATIN</scope>
    <scope>TISSUE SPECIFICITY</scope>
    <scope>INDUCTION</scope>
    <scope>ALTERNATIVE SPLICING (ISOFORM 1)</scope>
</reference>
<gene>
    <name type="primary">SETSIP</name>
    <name type="synonym">SETP18</name>
</gene>
<comment type="function">
    <text evidence="3">Plays a role as a transcriptional activator involved in the early stage of somatic cell reprogramming. Promotes the differentiation of protein-induced pluripotent stem (PiPS) cells into endothelial cells and the formation of vascular-like tubes (in vitro). Involved in the transcription induction of vascular endothelial-cadherin (VE-cadherin) expression. Associates to the VE-cadherin gene promoter.</text>
</comment>
<comment type="subcellular location">
    <subcellularLocation>
        <location evidence="3">Cytoplasm</location>
    </subcellularLocation>
    <subcellularLocation>
        <location evidence="3">Nucleus</location>
    </subcellularLocation>
    <text>Translocated from the cytoplasm to the nucleus in protein-induced pluripotent stem (PiPS) endothelial cells.</text>
</comment>
<comment type="alternative products">
    <event type="alternative initiation"/>
    <isoform>
        <id>P0DME0-2</id>
        <name>2</name>
        <sequence type="displayed"/>
    </isoform>
    <isoform>
        <id>P0DME0-1</id>
        <name>1</name>
        <sequence type="described" ref="VSP_062267"/>
    </isoform>
</comment>
<comment type="tissue specificity">
    <text evidence="3">Expressed in endothelial cell (EC) and protein-induced pluripotent stem (PiPS) endothelial cell (EC) (at protein level).</text>
</comment>
<comment type="induction">
    <text evidence="3">Up-regulated during protein-induced pluripotent stem (PiPS) endothelial cell differention. Up-regulated by VEGFA and POU2F1 (at protein level).</text>
</comment>
<comment type="miscellaneous">
    <molecule>Isoform 2</molecule>
    <text evidence="4">Gene prediction based on conservation data.</text>
</comment>
<comment type="miscellaneous">
    <text>Probable retrogene derived from SET transcript.</text>
</comment>
<comment type="similarity">
    <text evidence="4">Belongs to the nucleosome assembly protein (NAP) family.</text>
</comment>
<accession>P0DME0</accession>
<evidence type="ECO:0000255" key="1"/>
<evidence type="ECO:0000256" key="2">
    <source>
        <dbReference type="SAM" id="MobiDB-lite"/>
    </source>
</evidence>
<evidence type="ECO:0000269" key="3">
    <source>
    </source>
</evidence>
<evidence type="ECO:0000305" key="4"/>
<keyword id="KW-0010">Activator</keyword>
<keyword id="KW-0024">Alternative initiation</keyword>
<keyword id="KW-0175">Coiled coil</keyword>
<keyword id="KW-0963">Cytoplasm</keyword>
<keyword id="KW-0221">Differentiation</keyword>
<keyword id="KW-0539">Nucleus</keyword>
<keyword id="KW-1267">Proteomics identification</keyword>
<keyword id="KW-1185">Reference proteome</keyword>
<keyword id="KW-0804">Transcription</keyword>
<keyword id="KW-0805">Transcription regulation</keyword>
<organism>
    <name type="scientific">Homo sapiens</name>
    <name type="common">Human</name>
    <dbReference type="NCBI Taxonomy" id="9606"/>
    <lineage>
        <taxon>Eukaryota</taxon>
        <taxon>Metazoa</taxon>
        <taxon>Chordata</taxon>
        <taxon>Craniata</taxon>
        <taxon>Vertebrata</taxon>
        <taxon>Euteleostomi</taxon>
        <taxon>Mammalia</taxon>
        <taxon>Eutheria</taxon>
        <taxon>Euarchontoglires</taxon>
        <taxon>Primates</taxon>
        <taxon>Haplorrhini</taxon>
        <taxon>Catarrhini</taxon>
        <taxon>Hominidae</taxon>
        <taxon>Homo</taxon>
    </lineage>
</organism>
<protein>
    <recommendedName>
        <fullName>Protein SETSIP</fullName>
    </recommendedName>
    <alternativeName>
        <fullName>SET pseudogene protein 18</fullName>
    </alternativeName>
    <alternativeName>
        <fullName>SET similar protein</fullName>
    </alternativeName>
    <alternativeName>
        <fullName>Similar to SET translocation protein</fullName>
    </alternativeName>
</protein>